<sequence length="167" mass="19345">MATLDVLRFPDERLRKIATPIEKITSDLEHIIEDMFETMYLEEGIGLAATQVNIHKRLVVVDTSENRDQPMVFINPELIEKRGETGIEEGCLSVPECRAFVPRAEWIKVRALDRHGEPFEIEADGLLAICLQHEMDHLVGKLFVDYLSPLKRQRIRQKLEKLARNER</sequence>
<proteinExistence type="inferred from homology"/>
<evidence type="ECO:0000255" key="1">
    <source>
        <dbReference type="HAMAP-Rule" id="MF_00163"/>
    </source>
</evidence>
<organism>
    <name type="scientific">Tolumonas auensis (strain DSM 9187 / NBRC 110442 / TA 4)</name>
    <dbReference type="NCBI Taxonomy" id="595494"/>
    <lineage>
        <taxon>Bacteria</taxon>
        <taxon>Pseudomonadati</taxon>
        <taxon>Pseudomonadota</taxon>
        <taxon>Gammaproteobacteria</taxon>
        <taxon>Aeromonadales</taxon>
        <taxon>Aeromonadaceae</taxon>
        <taxon>Tolumonas</taxon>
    </lineage>
</organism>
<name>DEF_TOLAT</name>
<feature type="chain" id="PRO_1000203609" description="Peptide deformylase">
    <location>
        <begin position="1"/>
        <end position="167"/>
    </location>
</feature>
<feature type="active site" evidence="1">
    <location>
        <position position="134"/>
    </location>
</feature>
<feature type="binding site" evidence="1">
    <location>
        <position position="91"/>
    </location>
    <ligand>
        <name>Fe cation</name>
        <dbReference type="ChEBI" id="CHEBI:24875"/>
    </ligand>
</feature>
<feature type="binding site" evidence="1">
    <location>
        <position position="133"/>
    </location>
    <ligand>
        <name>Fe cation</name>
        <dbReference type="ChEBI" id="CHEBI:24875"/>
    </ligand>
</feature>
<feature type="binding site" evidence="1">
    <location>
        <position position="137"/>
    </location>
    <ligand>
        <name>Fe cation</name>
        <dbReference type="ChEBI" id="CHEBI:24875"/>
    </ligand>
</feature>
<gene>
    <name evidence="1" type="primary">def</name>
    <name type="ordered locus">Tola_0153</name>
</gene>
<accession>C4L7Y4</accession>
<reference key="1">
    <citation type="submission" date="2009-05" db="EMBL/GenBank/DDBJ databases">
        <title>Complete sequence of Tolumonas auensis DSM 9187.</title>
        <authorList>
            <consortium name="US DOE Joint Genome Institute"/>
            <person name="Lucas S."/>
            <person name="Copeland A."/>
            <person name="Lapidus A."/>
            <person name="Glavina del Rio T."/>
            <person name="Tice H."/>
            <person name="Bruce D."/>
            <person name="Goodwin L."/>
            <person name="Pitluck S."/>
            <person name="Chertkov O."/>
            <person name="Brettin T."/>
            <person name="Detter J.C."/>
            <person name="Han C."/>
            <person name="Larimer F."/>
            <person name="Land M."/>
            <person name="Hauser L."/>
            <person name="Kyrpides N."/>
            <person name="Mikhailova N."/>
            <person name="Spring S."/>
            <person name="Beller H."/>
        </authorList>
    </citation>
    <scope>NUCLEOTIDE SEQUENCE [LARGE SCALE GENOMIC DNA]</scope>
    <source>
        <strain>DSM 9187 / NBRC 110442 / TA 4</strain>
    </source>
</reference>
<comment type="function">
    <text evidence="1">Removes the formyl group from the N-terminal Met of newly synthesized proteins. Requires at least a dipeptide for an efficient rate of reaction. N-terminal L-methionine is a prerequisite for activity but the enzyme has broad specificity at other positions.</text>
</comment>
<comment type="catalytic activity">
    <reaction evidence="1">
        <text>N-terminal N-formyl-L-methionyl-[peptide] + H2O = N-terminal L-methionyl-[peptide] + formate</text>
        <dbReference type="Rhea" id="RHEA:24420"/>
        <dbReference type="Rhea" id="RHEA-COMP:10639"/>
        <dbReference type="Rhea" id="RHEA-COMP:10640"/>
        <dbReference type="ChEBI" id="CHEBI:15377"/>
        <dbReference type="ChEBI" id="CHEBI:15740"/>
        <dbReference type="ChEBI" id="CHEBI:49298"/>
        <dbReference type="ChEBI" id="CHEBI:64731"/>
        <dbReference type="EC" id="3.5.1.88"/>
    </reaction>
</comment>
<comment type="cofactor">
    <cofactor evidence="1">
        <name>Fe(2+)</name>
        <dbReference type="ChEBI" id="CHEBI:29033"/>
    </cofactor>
    <text evidence="1">Binds 1 Fe(2+) ion.</text>
</comment>
<comment type="similarity">
    <text evidence="1">Belongs to the polypeptide deformylase family.</text>
</comment>
<dbReference type="EC" id="3.5.1.88" evidence="1"/>
<dbReference type="EMBL" id="CP001616">
    <property type="protein sequence ID" value="ACQ91783.1"/>
    <property type="molecule type" value="Genomic_DNA"/>
</dbReference>
<dbReference type="RefSeq" id="WP_012728382.1">
    <property type="nucleotide sequence ID" value="NC_012691.1"/>
</dbReference>
<dbReference type="SMR" id="C4L7Y4"/>
<dbReference type="STRING" id="595494.Tola_0153"/>
<dbReference type="KEGG" id="tau:Tola_0153"/>
<dbReference type="eggNOG" id="COG0242">
    <property type="taxonomic scope" value="Bacteria"/>
</dbReference>
<dbReference type="HOGENOM" id="CLU_061901_2_1_6"/>
<dbReference type="OrthoDB" id="9804313at2"/>
<dbReference type="Proteomes" id="UP000009073">
    <property type="component" value="Chromosome"/>
</dbReference>
<dbReference type="GO" id="GO:0046872">
    <property type="term" value="F:metal ion binding"/>
    <property type="evidence" value="ECO:0007669"/>
    <property type="project" value="UniProtKB-KW"/>
</dbReference>
<dbReference type="GO" id="GO:0042586">
    <property type="term" value="F:peptide deformylase activity"/>
    <property type="evidence" value="ECO:0007669"/>
    <property type="project" value="UniProtKB-UniRule"/>
</dbReference>
<dbReference type="GO" id="GO:0043686">
    <property type="term" value="P:co-translational protein modification"/>
    <property type="evidence" value="ECO:0007669"/>
    <property type="project" value="TreeGrafter"/>
</dbReference>
<dbReference type="GO" id="GO:0006412">
    <property type="term" value="P:translation"/>
    <property type="evidence" value="ECO:0007669"/>
    <property type="project" value="UniProtKB-UniRule"/>
</dbReference>
<dbReference type="CDD" id="cd00487">
    <property type="entry name" value="Pep_deformylase"/>
    <property type="match status" value="1"/>
</dbReference>
<dbReference type="FunFam" id="3.90.45.10:FF:000001">
    <property type="entry name" value="Peptide deformylase"/>
    <property type="match status" value="1"/>
</dbReference>
<dbReference type="Gene3D" id="3.90.45.10">
    <property type="entry name" value="Peptide deformylase"/>
    <property type="match status" value="1"/>
</dbReference>
<dbReference type="HAMAP" id="MF_00163">
    <property type="entry name" value="Pep_deformylase"/>
    <property type="match status" value="1"/>
</dbReference>
<dbReference type="InterPro" id="IPR023635">
    <property type="entry name" value="Peptide_deformylase"/>
</dbReference>
<dbReference type="InterPro" id="IPR036821">
    <property type="entry name" value="Peptide_deformylase_sf"/>
</dbReference>
<dbReference type="NCBIfam" id="TIGR00079">
    <property type="entry name" value="pept_deformyl"/>
    <property type="match status" value="1"/>
</dbReference>
<dbReference type="NCBIfam" id="NF001159">
    <property type="entry name" value="PRK00150.1-3"/>
    <property type="match status" value="1"/>
</dbReference>
<dbReference type="PANTHER" id="PTHR10458">
    <property type="entry name" value="PEPTIDE DEFORMYLASE"/>
    <property type="match status" value="1"/>
</dbReference>
<dbReference type="PANTHER" id="PTHR10458:SF21">
    <property type="entry name" value="PEPTIDE DEFORMYLASE"/>
    <property type="match status" value="1"/>
</dbReference>
<dbReference type="Pfam" id="PF01327">
    <property type="entry name" value="Pep_deformylase"/>
    <property type="match status" value="1"/>
</dbReference>
<dbReference type="PIRSF" id="PIRSF004749">
    <property type="entry name" value="Pep_def"/>
    <property type="match status" value="1"/>
</dbReference>
<dbReference type="PRINTS" id="PR01576">
    <property type="entry name" value="PDEFORMYLASE"/>
</dbReference>
<dbReference type="SUPFAM" id="SSF56420">
    <property type="entry name" value="Peptide deformylase"/>
    <property type="match status" value="1"/>
</dbReference>
<keyword id="KW-0378">Hydrolase</keyword>
<keyword id="KW-0408">Iron</keyword>
<keyword id="KW-0479">Metal-binding</keyword>
<keyword id="KW-0648">Protein biosynthesis</keyword>
<keyword id="KW-1185">Reference proteome</keyword>
<protein>
    <recommendedName>
        <fullName evidence="1">Peptide deformylase</fullName>
        <shortName evidence="1">PDF</shortName>
        <ecNumber evidence="1">3.5.1.88</ecNumber>
    </recommendedName>
    <alternativeName>
        <fullName evidence="1">Polypeptide deformylase</fullName>
    </alternativeName>
</protein>